<protein>
    <recommendedName>
        <fullName evidence="1">Formate--tetrahydrofolate ligase</fullName>
        <ecNumber evidence="1">6.3.4.3</ecNumber>
    </recommendedName>
    <alternativeName>
        <fullName evidence="1">Formyltetrahydrofolate synthetase</fullName>
        <shortName evidence="1">FHS</shortName>
        <shortName evidence="1">FTHFS</shortName>
    </alternativeName>
</protein>
<dbReference type="EC" id="6.3.4.3" evidence="1"/>
<dbReference type="EMBL" id="CP000411">
    <property type="protein sequence ID" value="ABJ56696.1"/>
    <property type="molecule type" value="Genomic_DNA"/>
</dbReference>
<dbReference type="RefSeq" id="WP_002817357.1">
    <property type="nucleotide sequence ID" value="NC_008528.1"/>
</dbReference>
<dbReference type="SMR" id="Q04FS6"/>
<dbReference type="STRING" id="203123.OEOE_0769"/>
<dbReference type="KEGG" id="ooe:OEOE_0769"/>
<dbReference type="eggNOG" id="COG2759">
    <property type="taxonomic scope" value="Bacteria"/>
</dbReference>
<dbReference type="HOGENOM" id="CLU_003601_3_3_9"/>
<dbReference type="UniPathway" id="UPA00193"/>
<dbReference type="Proteomes" id="UP000000774">
    <property type="component" value="Chromosome"/>
</dbReference>
<dbReference type="GO" id="GO:0005524">
    <property type="term" value="F:ATP binding"/>
    <property type="evidence" value="ECO:0007669"/>
    <property type="project" value="UniProtKB-UniRule"/>
</dbReference>
<dbReference type="GO" id="GO:0004329">
    <property type="term" value="F:formate-tetrahydrofolate ligase activity"/>
    <property type="evidence" value="ECO:0007669"/>
    <property type="project" value="UniProtKB-UniRule"/>
</dbReference>
<dbReference type="GO" id="GO:0035999">
    <property type="term" value="P:tetrahydrofolate interconversion"/>
    <property type="evidence" value="ECO:0007669"/>
    <property type="project" value="UniProtKB-UniRule"/>
</dbReference>
<dbReference type="FunFam" id="3.30.1510.10:FF:000001">
    <property type="entry name" value="Formate--tetrahydrofolate ligase"/>
    <property type="match status" value="1"/>
</dbReference>
<dbReference type="Gene3D" id="3.30.1510.10">
    <property type="entry name" value="Domain 2, N(10)-formyltetrahydrofolate synthetase"/>
    <property type="match status" value="1"/>
</dbReference>
<dbReference type="Gene3D" id="3.10.410.10">
    <property type="entry name" value="Formyltetrahydrofolate synthetase, domain 3"/>
    <property type="match status" value="1"/>
</dbReference>
<dbReference type="Gene3D" id="3.40.50.300">
    <property type="entry name" value="P-loop containing nucleotide triphosphate hydrolases"/>
    <property type="match status" value="1"/>
</dbReference>
<dbReference type="HAMAP" id="MF_01543">
    <property type="entry name" value="FTHFS"/>
    <property type="match status" value="1"/>
</dbReference>
<dbReference type="InterPro" id="IPR000559">
    <property type="entry name" value="Formate_THF_ligase"/>
</dbReference>
<dbReference type="InterPro" id="IPR020628">
    <property type="entry name" value="Formate_THF_ligase_CS"/>
</dbReference>
<dbReference type="InterPro" id="IPR027417">
    <property type="entry name" value="P-loop_NTPase"/>
</dbReference>
<dbReference type="NCBIfam" id="NF010030">
    <property type="entry name" value="PRK13505.1"/>
    <property type="match status" value="1"/>
</dbReference>
<dbReference type="Pfam" id="PF01268">
    <property type="entry name" value="FTHFS"/>
    <property type="match status" value="1"/>
</dbReference>
<dbReference type="SUPFAM" id="SSF52540">
    <property type="entry name" value="P-loop containing nucleoside triphosphate hydrolases"/>
    <property type="match status" value="1"/>
</dbReference>
<dbReference type="PROSITE" id="PS00721">
    <property type="entry name" value="FTHFS_1"/>
    <property type="match status" value="1"/>
</dbReference>
<evidence type="ECO:0000255" key="1">
    <source>
        <dbReference type="HAMAP-Rule" id="MF_01543"/>
    </source>
</evidence>
<comment type="catalytic activity">
    <reaction evidence="1">
        <text>(6S)-5,6,7,8-tetrahydrofolate + formate + ATP = (6R)-10-formyltetrahydrofolate + ADP + phosphate</text>
        <dbReference type="Rhea" id="RHEA:20221"/>
        <dbReference type="ChEBI" id="CHEBI:15740"/>
        <dbReference type="ChEBI" id="CHEBI:30616"/>
        <dbReference type="ChEBI" id="CHEBI:43474"/>
        <dbReference type="ChEBI" id="CHEBI:57453"/>
        <dbReference type="ChEBI" id="CHEBI:195366"/>
        <dbReference type="ChEBI" id="CHEBI:456216"/>
        <dbReference type="EC" id="6.3.4.3"/>
    </reaction>
</comment>
<comment type="pathway">
    <text evidence="1">One-carbon metabolism; tetrahydrofolate interconversion.</text>
</comment>
<comment type="similarity">
    <text evidence="1">Belongs to the formate--tetrahydrofolate ligase family.</text>
</comment>
<feature type="chain" id="PRO_0000300532" description="Formate--tetrahydrofolate ligase">
    <location>
        <begin position="1"/>
        <end position="553"/>
    </location>
</feature>
<feature type="binding site" evidence="1">
    <location>
        <begin position="63"/>
        <end position="70"/>
    </location>
    <ligand>
        <name>ATP</name>
        <dbReference type="ChEBI" id="CHEBI:30616"/>
    </ligand>
</feature>
<accession>Q04FS6</accession>
<organism>
    <name type="scientific">Oenococcus oeni (strain ATCC BAA-331 / PSU-1)</name>
    <dbReference type="NCBI Taxonomy" id="203123"/>
    <lineage>
        <taxon>Bacteria</taxon>
        <taxon>Bacillati</taxon>
        <taxon>Bacillota</taxon>
        <taxon>Bacilli</taxon>
        <taxon>Lactobacillales</taxon>
        <taxon>Lactobacillaceae</taxon>
        <taxon>Oenococcus</taxon>
    </lineage>
</organism>
<reference key="1">
    <citation type="journal article" date="2006" name="Proc. Natl. Acad. Sci. U.S.A.">
        <title>Comparative genomics of the lactic acid bacteria.</title>
        <authorList>
            <person name="Makarova K.S."/>
            <person name="Slesarev A."/>
            <person name="Wolf Y.I."/>
            <person name="Sorokin A."/>
            <person name="Mirkin B."/>
            <person name="Koonin E.V."/>
            <person name="Pavlov A."/>
            <person name="Pavlova N."/>
            <person name="Karamychev V."/>
            <person name="Polouchine N."/>
            <person name="Shakhova V."/>
            <person name="Grigoriev I."/>
            <person name="Lou Y."/>
            <person name="Rohksar D."/>
            <person name="Lucas S."/>
            <person name="Huang K."/>
            <person name="Goodstein D.M."/>
            <person name="Hawkins T."/>
            <person name="Plengvidhya V."/>
            <person name="Welker D."/>
            <person name="Hughes J."/>
            <person name="Goh Y."/>
            <person name="Benson A."/>
            <person name="Baldwin K."/>
            <person name="Lee J.-H."/>
            <person name="Diaz-Muniz I."/>
            <person name="Dosti B."/>
            <person name="Smeianov V."/>
            <person name="Wechter W."/>
            <person name="Barabote R."/>
            <person name="Lorca G."/>
            <person name="Altermann E."/>
            <person name="Barrangou R."/>
            <person name="Ganesan B."/>
            <person name="Xie Y."/>
            <person name="Rawsthorne H."/>
            <person name="Tamir D."/>
            <person name="Parker C."/>
            <person name="Breidt F."/>
            <person name="Broadbent J.R."/>
            <person name="Hutkins R."/>
            <person name="O'Sullivan D."/>
            <person name="Steele J."/>
            <person name="Unlu G."/>
            <person name="Saier M.H. Jr."/>
            <person name="Klaenhammer T."/>
            <person name="Richardson P."/>
            <person name="Kozyavkin S."/>
            <person name="Weimer B.C."/>
            <person name="Mills D.A."/>
        </authorList>
    </citation>
    <scope>NUCLEOTIDE SEQUENCE [LARGE SCALE GENOMIC DNA]</scope>
    <source>
        <strain>ATCC BAA-331 / PSU-1</strain>
    </source>
</reference>
<sequence length="553" mass="59483">MKSDIEIDHSIKALPITEIGKQIGLSDSQLIPYGHDKAKIDAYSIANMPRQGKLVLVTSINPTPAGEGKTTVTIGLVDAINRLGKSAIGALREPSMGPVFGLKGGATGGGYAQVIPMEDINLHFTGDIHAVSAAHNLLAAVIDNHLHQGNELKIDPENIYWRRVLDMNDRALRQITLGKGRVNGPERNSGFDITASSEIMAVLTLSKNLFDLKKRLSRIVVALDVQGKPVTVADLKVAGALTAILKDAINPNLVQSLEHSPFIIHGGPFANIAQGTNSVVATDAALKLADFAVTEAGFGSDLGGEKFMDVKVPVLGKEPDAVVIVATVKALKFHGGVALDHLSDKNVDAVRNGLDNLNRHLEAMTHYGKPVVVALNKFLDDDMEEIQLIKNFVEGEKKLQFEIVTSFVDGFEGSLDLAKKVIEATDNQRFFMPLYQADDSIENKIQTIVEKIYGGKDFELSDRAKKDLAEVKENGWGKLPVVIAKTPNSLTDDSKIHGAPTGFTIHIRRFIPKIGAGFIVAMAGKVLMMPGLGKNPAAEKIDVDENGKISGLS</sequence>
<name>FTHS_OENOB</name>
<gene>
    <name evidence="1" type="primary">fhs</name>
    <name type="ordered locus">OEOE_0769</name>
</gene>
<proteinExistence type="inferred from homology"/>
<keyword id="KW-0067">ATP-binding</keyword>
<keyword id="KW-0436">Ligase</keyword>
<keyword id="KW-0547">Nucleotide-binding</keyword>
<keyword id="KW-0554">One-carbon metabolism</keyword>
<keyword id="KW-1185">Reference proteome</keyword>